<comment type="function">
    <text evidence="2">Involved in base excision repair of DNA damaged by oxidation or by mutagenic agents. Acts as a DNA glycosylase that recognizes and removes damaged bases. Has a preference for oxidized purines, such as 7,8-dihydro-8-oxoguanine (8-oxoG). Has AP (apurinic/apyrimidinic) lyase activity and introduces nicks in the DNA strand. Cleaves the DNA backbone by beta-delta elimination to generate a single-strand break at the site of the removed base with both 3'- and 5'-phosphates.</text>
</comment>
<comment type="catalytic activity">
    <reaction evidence="2">
        <text>Hydrolysis of DNA containing ring-opened 7-methylguanine residues, releasing 2,6-diamino-4-hydroxy-5-(N-methyl)formamidopyrimidine.</text>
        <dbReference type="EC" id="3.2.2.23"/>
    </reaction>
</comment>
<comment type="catalytic activity">
    <reaction evidence="2">
        <text>2'-deoxyribonucleotide-(2'-deoxyribose 5'-phosphate)-2'-deoxyribonucleotide-DNA = a 3'-end 2'-deoxyribonucleotide-(2,3-dehydro-2,3-deoxyribose 5'-phosphate)-DNA + a 5'-end 5'-phospho-2'-deoxyribonucleoside-DNA + H(+)</text>
        <dbReference type="Rhea" id="RHEA:66592"/>
        <dbReference type="Rhea" id="RHEA-COMP:13180"/>
        <dbReference type="Rhea" id="RHEA-COMP:16897"/>
        <dbReference type="Rhea" id="RHEA-COMP:17067"/>
        <dbReference type="ChEBI" id="CHEBI:15378"/>
        <dbReference type="ChEBI" id="CHEBI:136412"/>
        <dbReference type="ChEBI" id="CHEBI:157695"/>
        <dbReference type="ChEBI" id="CHEBI:167181"/>
        <dbReference type="EC" id="4.2.99.18"/>
    </reaction>
</comment>
<comment type="cofactor">
    <cofactor evidence="2">
        <name>Zn(2+)</name>
        <dbReference type="ChEBI" id="CHEBI:29105"/>
    </cofactor>
    <text evidence="2">Binds 1 zinc ion per subunit.</text>
</comment>
<comment type="subunit">
    <text evidence="2">Monomer.</text>
</comment>
<comment type="similarity">
    <text evidence="2">Belongs to the FPG family.</text>
</comment>
<proteinExistence type="inferred from homology"/>
<feature type="initiator methionine" description="Removed" evidence="1">
    <location>
        <position position="1"/>
    </location>
</feature>
<feature type="chain" id="PRO_0000170881" description="Formamidopyrimidine-DNA glycosylase">
    <location>
        <begin position="2"/>
        <end position="275"/>
    </location>
</feature>
<feature type="zinc finger region" description="FPG-type" evidence="2">
    <location>
        <begin position="241"/>
        <end position="275"/>
    </location>
</feature>
<feature type="active site" description="Schiff-base intermediate with DNA" evidence="2">
    <location>
        <position position="2"/>
    </location>
</feature>
<feature type="active site" description="Proton donor" evidence="2">
    <location>
        <position position="3"/>
    </location>
</feature>
<feature type="active site" description="Proton donor; for beta-elimination activity" evidence="2">
    <location>
        <position position="59"/>
    </location>
</feature>
<feature type="active site" description="Proton donor; for delta-elimination activity" evidence="2">
    <location>
        <position position="265"/>
    </location>
</feature>
<feature type="binding site" evidence="2">
    <location>
        <position position="94"/>
    </location>
    <ligand>
        <name>DNA</name>
        <dbReference type="ChEBI" id="CHEBI:16991"/>
    </ligand>
</feature>
<feature type="binding site" evidence="2">
    <location>
        <position position="113"/>
    </location>
    <ligand>
        <name>DNA</name>
        <dbReference type="ChEBI" id="CHEBI:16991"/>
    </ligand>
</feature>
<protein>
    <recommendedName>
        <fullName evidence="2">Formamidopyrimidine-DNA glycosylase</fullName>
        <shortName evidence="2">Fapy-DNA glycosylase</shortName>
        <ecNumber evidence="2">3.2.2.23</ecNumber>
    </recommendedName>
    <alternativeName>
        <fullName evidence="2">DNA-(apurinic or apyrimidinic site) lyase MutM</fullName>
        <shortName evidence="2">AP lyase MutM</shortName>
        <ecNumber evidence="2">4.2.99.18</ecNumber>
    </alternativeName>
</protein>
<keyword id="KW-0227">DNA damage</keyword>
<keyword id="KW-0234">DNA repair</keyword>
<keyword id="KW-0238">DNA-binding</keyword>
<keyword id="KW-0326">Glycosidase</keyword>
<keyword id="KW-0378">Hydrolase</keyword>
<keyword id="KW-0456">Lyase</keyword>
<keyword id="KW-0479">Metal-binding</keyword>
<keyword id="KW-0511">Multifunctional enzyme</keyword>
<keyword id="KW-1185">Reference proteome</keyword>
<keyword id="KW-0862">Zinc</keyword>
<keyword id="KW-0863">Zinc-finger</keyword>
<gene>
    <name evidence="2" type="primary">mutM</name>
    <name evidence="2" type="synonym">fpg</name>
    <name type="ordered locus">UU413</name>
</gene>
<sequence>MPELPEVQTIVDYLNHHVLDIFIKKTIVHLPKILKNKTPQEFEKLLINHKIVKIKRLGKYLLFFLSNNLVLSVHLRMEGKFYYQAKEEWFNLAHTHIIIEFNNGMQLRYNDTRQFGTFHIYEQQSFLDSKELKKIALDPLDNNFSAQYLYEKLKKSNKAIKTALLDQSVVSGIGNIYADEILFAAKIFPTILAKNLTLKNYEKITKEAQRILLLSIKNKGTTIHTYKFGNDETGLFQKMLLVHTHAKEPCQICGTIIQKTKVNGRGTYYCPNCQN</sequence>
<evidence type="ECO:0000250" key="1"/>
<evidence type="ECO:0000255" key="2">
    <source>
        <dbReference type="HAMAP-Rule" id="MF_00103"/>
    </source>
</evidence>
<reference key="1">
    <citation type="journal article" date="2000" name="Nature">
        <title>The complete sequence of the mucosal pathogen Ureaplasma urealyticum.</title>
        <authorList>
            <person name="Glass J.I."/>
            <person name="Lefkowitz E.J."/>
            <person name="Glass J.S."/>
            <person name="Heiner C.R."/>
            <person name="Chen E.Y."/>
            <person name="Cassell G.H."/>
        </authorList>
    </citation>
    <scope>NUCLEOTIDE SEQUENCE [LARGE SCALE GENOMIC DNA]</scope>
    <source>
        <strain>ATCC 700970</strain>
    </source>
</reference>
<accession>Q9PQ76</accession>
<organism>
    <name type="scientific">Ureaplasma parvum serovar 3 (strain ATCC 700970)</name>
    <dbReference type="NCBI Taxonomy" id="273119"/>
    <lineage>
        <taxon>Bacteria</taxon>
        <taxon>Bacillati</taxon>
        <taxon>Mycoplasmatota</taxon>
        <taxon>Mycoplasmoidales</taxon>
        <taxon>Mycoplasmoidaceae</taxon>
        <taxon>Ureaplasma</taxon>
    </lineage>
</organism>
<name>FPG_UREPA</name>
<dbReference type="EC" id="3.2.2.23" evidence="2"/>
<dbReference type="EC" id="4.2.99.18" evidence="2"/>
<dbReference type="EMBL" id="AF222894">
    <property type="protein sequence ID" value="AAF30824.1"/>
    <property type="molecule type" value="Genomic_DNA"/>
</dbReference>
<dbReference type="RefSeq" id="WP_006689001.1">
    <property type="nucleotide sequence ID" value="NC_002162.1"/>
</dbReference>
<dbReference type="SMR" id="Q9PQ76"/>
<dbReference type="STRING" id="273119.UU413"/>
<dbReference type="EnsemblBacteria" id="AAF30824">
    <property type="protein sequence ID" value="AAF30824"/>
    <property type="gene ID" value="UU413"/>
</dbReference>
<dbReference type="GeneID" id="29672493"/>
<dbReference type="KEGG" id="uur:UU413"/>
<dbReference type="eggNOG" id="COG0266">
    <property type="taxonomic scope" value="Bacteria"/>
</dbReference>
<dbReference type="HOGENOM" id="CLU_038423_1_3_14"/>
<dbReference type="OrthoDB" id="9800855at2"/>
<dbReference type="Proteomes" id="UP000000423">
    <property type="component" value="Chromosome"/>
</dbReference>
<dbReference type="GO" id="GO:0034039">
    <property type="term" value="F:8-oxo-7,8-dihydroguanine DNA N-glycosylase activity"/>
    <property type="evidence" value="ECO:0007669"/>
    <property type="project" value="TreeGrafter"/>
</dbReference>
<dbReference type="GO" id="GO:0140078">
    <property type="term" value="F:class I DNA-(apurinic or apyrimidinic site) endonuclease activity"/>
    <property type="evidence" value="ECO:0007669"/>
    <property type="project" value="UniProtKB-EC"/>
</dbReference>
<dbReference type="GO" id="GO:0003684">
    <property type="term" value="F:damaged DNA binding"/>
    <property type="evidence" value="ECO:0007669"/>
    <property type="project" value="InterPro"/>
</dbReference>
<dbReference type="GO" id="GO:0008270">
    <property type="term" value="F:zinc ion binding"/>
    <property type="evidence" value="ECO:0007669"/>
    <property type="project" value="UniProtKB-UniRule"/>
</dbReference>
<dbReference type="GO" id="GO:0006284">
    <property type="term" value="P:base-excision repair"/>
    <property type="evidence" value="ECO:0007669"/>
    <property type="project" value="InterPro"/>
</dbReference>
<dbReference type="CDD" id="cd08966">
    <property type="entry name" value="EcFpg-like_N"/>
    <property type="match status" value="1"/>
</dbReference>
<dbReference type="FunFam" id="1.10.8.50:FF:000003">
    <property type="entry name" value="Formamidopyrimidine-DNA glycosylase"/>
    <property type="match status" value="1"/>
</dbReference>
<dbReference type="Gene3D" id="1.10.8.50">
    <property type="match status" value="1"/>
</dbReference>
<dbReference type="Gene3D" id="3.20.190.10">
    <property type="entry name" value="MutM-like, N-terminal"/>
    <property type="match status" value="1"/>
</dbReference>
<dbReference type="HAMAP" id="MF_00103">
    <property type="entry name" value="Fapy_DNA_glycosyl"/>
    <property type="match status" value="1"/>
</dbReference>
<dbReference type="InterPro" id="IPR015886">
    <property type="entry name" value="DNA_glyclase/AP_lyase_DNA-bd"/>
</dbReference>
<dbReference type="InterPro" id="IPR015887">
    <property type="entry name" value="DNA_glyclase_Znf_dom_DNA_BS"/>
</dbReference>
<dbReference type="InterPro" id="IPR020629">
    <property type="entry name" value="Formamido-pyr_DNA_Glyclase"/>
</dbReference>
<dbReference type="InterPro" id="IPR012319">
    <property type="entry name" value="FPG_cat"/>
</dbReference>
<dbReference type="InterPro" id="IPR035937">
    <property type="entry name" value="MutM-like_N-ter"/>
</dbReference>
<dbReference type="InterPro" id="IPR010979">
    <property type="entry name" value="Ribosomal_uS13-like_H2TH"/>
</dbReference>
<dbReference type="InterPro" id="IPR000214">
    <property type="entry name" value="Znf_DNA_glyclase/AP_lyase"/>
</dbReference>
<dbReference type="InterPro" id="IPR010663">
    <property type="entry name" value="Znf_FPG/IleRS"/>
</dbReference>
<dbReference type="NCBIfam" id="TIGR00577">
    <property type="entry name" value="fpg"/>
    <property type="match status" value="1"/>
</dbReference>
<dbReference type="NCBIfam" id="NF002211">
    <property type="entry name" value="PRK01103.1"/>
    <property type="match status" value="1"/>
</dbReference>
<dbReference type="PANTHER" id="PTHR22993">
    <property type="entry name" value="FORMAMIDOPYRIMIDINE-DNA GLYCOSYLASE"/>
    <property type="match status" value="1"/>
</dbReference>
<dbReference type="PANTHER" id="PTHR22993:SF9">
    <property type="entry name" value="FORMAMIDOPYRIMIDINE-DNA GLYCOSYLASE"/>
    <property type="match status" value="1"/>
</dbReference>
<dbReference type="Pfam" id="PF01149">
    <property type="entry name" value="Fapy_DNA_glyco"/>
    <property type="match status" value="1"/>
</dbReference>
<dbReference type="Pfam" id="PF06831">
    <property type="entry name" value="H2TH"/>
    <property type="match status" value="1"/>
</dbReference>
<dbReference type="Pfam" id="PF06827">
    <property type="entry name" value="zf-FPG_IleRS"/>
    <property type="match status" value="1"/>
</dbReference>
<dbReference type="SMART" id="SM00898">
    <property type="entry name" value="Fapy_DNA_glyco"/>
    <property type="match status" value="1"/>
</dbReference>
<dbReference type="SMART" id="SM01232">
    <property type="entry name" value="H2TH"/>
    <property type="match status" value="1"/>
</dbReference>
<dbReference type="SUPFAM" id="SSF57716">
    <property type="entry name" value="Glucocorticoid receptor-like (DNA-binding domain)"/>
    <property type="match status" value="1"/>
</dbReference>
<dbReference type="SUPFAM" id="SSF81624">
    <property type="entry name" value="N-terminal domain of MutM-like DNA repair proteins"/>
    <property type="match status" value="1"/>
</dbReference>
<dbReference type="SUPFAM" id="SSF46946">
    <property type="entry name" value="S13-like H2TH domain"/>
    <property type="match status" value="1"/>
</dbReference>
<dbReference type="PROSITE" id="PS51068">
    <property type="entry name" value="FPG_CAT"/>
    <property type="match status" value="1"/>
</dbReference>
<dbReference type="PROSITE" id="PS01242">
    <property type="entry name" value="ZF_FPG_1"/>
    <property type="match status" value="1"/>
</dbReference>
<dbReference type="PROSITE" id="PS51066">
    <property type="entry name" value="ZF_FPG_2"/>
    <property type="match status" value="1"/>
</dbReference>